<comment type="function">
    <text evidence="1">A key translational regulator that binds mRNA to regulate translation initiation and/or mRNA stability. Mediates global changes in gene expression, shifting from rapid growth to stress survival by linking envelope stress, the stringent response and the catabolite repression systems. Usually binds in the 5'-UTR; binding at or near the Shine-Dalgarno sequence prevents ribosome-binding, repressing translation, binding elsewhere in the 5'-UTR can activate translation and/or stabilize the mRNA. Its function is antagonized by small RNA(s).</text>
</comment>
<comment type="subunit">
    <text evidence="1">Homodimer; the beta-strands of each monomer intercalate to form a hydrophobic core, while the alpha-helices form wings that extend away from the core.</text>
</comment>
<comment type="subcellular location">
    <subcellularLocation>
        <location evidence="1">Cytoplasm</location>
    </subcellularLocation>
</comment>
<comment type="similarity">
    <text evidence="1">Belongs to the CsrA/RsmA family.</text>
</comment>
<evidence type="ECO:0000255" key="1">
    <source>
        <dbReference type="HAMAP-Rule" id="MF_00167"/>
    </source>
</evidence>
<sequence>MLVLTRRVGETLMIGDDIKLTVVGIKSGQVRLGIDAPKDVQIQREELLLKNDKAENQAAESLEIEIVAAD</sequence>
<name>CSRA_HYDCU</name>
<keyword id="KW-0010">Activator</keyword>
<keyword id="KW-0963">Cytoplasm</keyword>
<keyword id="KW-0678">Repressor</keyword>
<keyword id="KW-0694">RNA-binding</keyword>
<keyword id="KW-0810">Translation regulation</keyword>
<accession>Q31F93</accession>
<protein>
    <recommendedName>
        <fullName evidence="1">Translational regulator CsrA</fullName>
    </recommendedName>
    <alternativeName>
        <fullName evidence="1">Carbon storage regulator</fullName>
    </alternativeName>
</protein>
<organism>
    <name type="scientific">Hydrogenovibrio crunogenus (strain DSM 25203 / XCL-2)</name>
    <name type="common">Thiomicrospira crunogena</name>
    <dbReference type="NCBI Taxonomy" id="317025"/>
    <lineage>
        <taxon>Bacteria</taxon>
        <taxon>Pseudomonadati</taxon>
        <taxon>Pseudomonadota</taxon>
        <taxon>Gammaproteobacteria</taxon>
        <taxon>Thiotrichales</taxon>
        <taxon>Piscirickettsiaceae</taxon>
        <taxon>Hydrogenovibrio</taxon>
    </lineage>
</organism>
<proteinExistence type="inferred from homology"/>
<feature type="chain" id="PRO_1000023435" description="Translational regulator CsrA">
    <location>
        <begin position="1"/>
        <end position="70"/>
    </location>
</feature>
<dbReference type="EMBL" id="CP000109">
    <property type="protein sequence ID" value="ABB42180.1"/>
    <property type="molecule type" value="Genomic_DNA"/>
</dbReference>
<dbReference type="SMR" id="Q31F93"/>
<dbReference type="STRING" id="317025.Tcr_1588"/>
<dbReference type="KEGG" id="tcx:Tcr_1588"/>
<dbReference type="eggNOG" id="COG1551">
    <property type="taxonomic scope" value="Bacteria"/>
</dbReference>
<dbReference type="HOGENOM" id="CLU_164837_2_1_6"/>
<dbReference type="OrthoDB" id="9809061at2"/>
<dbReference type="GO" id="GO:0005829">
    <property type="term" value="C:cytosol"/>
    <property type="evidence" value="ECO:0007669"/>
    <property type="project" value="TreeGrafter"/>
</dbReference>
<dbReference type="GO" id="GO:0048027">
    <property type="term" value="F:mRNA 5'-UTR binding"/>
    <property type="evidence" value="ECO:0007669"/>
    <property type="project" value="UniProtKB-UniRule"/>
</dbReference>
<dbReference type="GO" id="GO:0006402">
    <property type="term" value="P:mRNA catabolic process"/>
    <property type="evidence" value="ECO:0007669"/>
    <property type="project" value="InterPro"/>
</dbReference>
<dbReference type="GO" id="GO:0045947">
    <property type="term" value="P:negative regulation of translational initiation"/>
    <property type="evidence" value="ECO:0007669"/>
    <property type="project" value="UniProtKB-UniRule"/>
</dbReference>
<dbReference type="GO" id="GO:0045948">
    <property type="term" value="P:positive regulation of translational initiation"/>
    <property type="evidence" value="ECO:0007669"/>
    <property type="project" value="UniProtKB-UniRule"/>
</dbReference>
<dbReference type="GO" id="GO:0006109">
    <property type="term" value="P:regulation of carbohydrate metabolic process"/>
    <property type="evidence" value="ECO:0007669"/>
    <property type="project" value="UniProtKB-UniRule"/>
</dbReference>
<dbReference type="FunFam" id="2.60.40.4380:FF:000002">
    <property type="entry name" value="Translational regulator CsrA"/>
    <property type="match status" value="1"/>
</dbReference>
<dbReference type="Gene3D" id="2.60.40.4380">
    <property type="entry name" value="Translational regulator CsrA"/>
    <property type="match status" value="1"/>
</dbReference>
<dbReference type="HAMAP" id="MF_00167">
    <property type="entry name" value="CsrA"/>
    <property type="match status" value="1"/>
</dbReference>
<dbReference type="InterPro" id="IPR003751">
    <property type="entry name" value="CsrA"/>
</dbReference>
<dbReference type="InterPro" id="IPR036107">
    <property type="entry name" value="CsrA_sf"/>
</dbReference>
<dbReference type="NCBIfam" id="TIGR00202">
    <property type="entry name" value="csrA"/>
    <property type="match status" value="1"/>
</dbReference>
<dbReference type="NCBIfam" id="NF002469">
    <property type="entry name" value="PRK01712.1"/>
    <property type="match status" value="1"/>
</dbReference>
<dbReference type="PANTHER" id="PTHR34984">
    <property type="entry name" value="CARBON STORAGE REGULATOR"/>
    <property type="match status" value="1"/>
</dbReference>
<dbReference type="PANTHER" id="PTHR34984:SF1">
    <property type="entry name" value="CARBON STORAGE REGULATOR"/>
    <property type="match status" value="1"/>
</dbReference>
<dbReference type="Pfam" id="PF02599">
    <property type="entry name" value="CsrA"/>
    <property type="match status" value="1"/>
</dbReference>
<dbReference type="SUPFAM" id="SSF117130">
    <property type="entry name" value="CsrA-like"/>
    <property type="match status" value="1"/>
</dbReference>
<reference key="1">
    <citation type="journal article" date="2006" name="PLoS Biol.">
        <title>The genome of deep-sea vent chemolithoautotroph Thiomicrospira crunogena XCL-2.</title>
        <authorList>
            <person name="Scott K.M."/>
            <person name="Sievert S.M."/>
            <person name="Abril F.N."/>
            <person name="Ball L.A."/>
            <person name="Barrett C.J."/>
            <person name="Blake R.A."/>
            <person name="Boller A.J."/>
            <person name="Chain P.S.G."/>
            <person name="Clark J.A."/>
            <person name="Davis C.R."/>
            <person name="Detter C."/>
            <person name="Do K.F."/>
            <person name="Dobrinski K.P."/>
            <person name="Faza B.I."/>
            <person name="Fitzpatrick K.A."/>
            <person name="Freyermuth S.K."/>
            <person name="Harmer T.L."/>
            <person name="Hauser L.J."/>
            <person name="Huegler M."/>
            <person name="Kerfeld C.A."/>
            <person name="Klotz M.G."/>
            <person name="Kong W.W."/>
            <person name="Land M."/>
            <person name="Lapidus A."/>
            <person name="Larimer F.W."/>
            <person name="Longo D.L."/>
            <person name="Lucas S."/>
            <person name="Malfatti S.A."/>
            <person name="Massey S.E."/>
            <person name="Martin D.D."/>
            <person name="McCuddin Z."/>
            <person name="Meyer F."/>
            <person name="Moore J.L."/>
            <person name="Ocampo L.H. Jr."/>
            <person name="Paul J.H."/>
            <person name="Paulsen I.T."/>
            <person name="Reep D.K."/>
            <person name="Ren Q."/>
            <person name="Ross R.L."/>
            <person name="Sato P.Y."/>
            <person name="Thomas P."/>
            <person name="Tinkham L.E."/>
            <person name="Zeruth G.T."/>
        </authorList>
    </citation>
    <scope>NUCLEOTIDE SEQUENCE [LARGE SCALE GENOMIC DNA]</scope>
    <source>
        <strain>DSM 25203 / XCL-2</strain>
    </source>
</reference>
<gene>
    <name evidence="1" type="primary">csrA</name>
    <name type="ordered locus">Tcr_1588</name>
</gene>